<evidence type="ECO:0000269" key="1">
    <source>
    </source>
</evidence>
<evidence type="ECO:0000303" key="2">
    <source>
    </source>
</evidence>
<evidence type="ECO:0000305" key="3"/>
<comment type="function">
    <text evidence="3">Myoactive peptide. Increases the amplitude and frequency of spontaneous contractions and tonus of hindgut muscle.</text>
</comment>
<comment type="subcellular location">
    <subcellularLocation>
        <location evidence="3">Secreted</location>
    </subcellularLocation>
</comment>
<comment type="mass spectrometry" mass="1097.48" method="MALDI" evidence="1"/>
<dbReference type="InParanoid" id="P85805"/>
<dbReference type="Proteomes" id="UP000015103">
    <property type="component" value="Unassembled WGS sequence"/>
</dbReference>
<dbReference type="GO" id="GO:0005576">
    <property type="term" value="C:extracellular region"/>
    <property type="evidence" value="ECO:0007669"/>
    <property type="project" value="UniProtKB-SubCell"/>
</dbReference>
<dbReference type="GO" id="GO:0007218">
    <property type="term" value="P:neuropeptide signaling pathway"/>
    <property type="evidence" value="ECO:0007669"/>
    <property type="project" value="UniProtKB-KW"/>
</dbReference>
<keyword id="KW-0027">Amidation</keyword>
<keyword id="KW-0903">Direct protein sequencing</keyword>
<keyword id="KW-0527">Neuropeptide</keyword>
<keyword id="KW-1185">Reference proteome</keyword>
<keyword id="KW-0964">Secreted</keyword>
<protein>
    <recommendedName>
        <fullName evidence="2">Tachykinin-related peptide 4</fullName>
        <shortName evidence="2">Rhopr-TRP-4</shortName>
    </recommendedName>
</protein>
<proteinExistence type="evidence at protein level"/>
<organism>
    <name type="scientific">Rhodnius prolixus</name>
    <name type="common">Triatomid bug</name>
    <dbReference type="NCBI Taxonomy" id="13249"/>
    <lineage>
        <taxon>Eukaryota</taxon>
        <taxon>Metazoa</taxon>
        <taxon>Ecdysozoa</taxon>
        <taxon>Arthropoda</taxon>
        <taxon>Hexapoda</taxon>
        <taxon>Insecta</taxon>
        <taxon>Pterygota</taxon>
        <taxon>Neoptera</taxon>
        <taxon>Paraneoptera</taxon>
        <taxon>Hemiptera</taxon>
        <taxon>Heteroptera</taxon>
        <taxon>Panheteroptera</taxon>
        <taxon>Cimicomorpha</taxon>
        <taxon>Reduviidae</taxon>
        <taxon>Triatominae</taxon>
        <taxon>Rhodnius</taxon>
    </lineage>
</organism>
<feature type="peptide" id="PRO_0000365755" description="Tachykinin-related peptide 4" evidence="1">
    <location>
        <begin position="1"/>
        <end position="10"/>
    </location>
</feature>
<feature type="modified residue" description="Arginine amide" evidence="1">
    <location>
        <position position="10"/>
    </location>
</feature>
<sequence length="10" mass="1098">TPSDGFMGMR</sequence>
<reference evidence="3" key="1">
    <citation type="journal article" date="2009" name="Proteomics">
        <title>The neuropeptidome of Rhodnius prolixus brain.</title>
        <authorList>
            <person name="Ons S."/>
            <person name="Richter F."/>
            <person name="Urlaub H."/>
            <person name="Pomar R.R."/>
        </authorList>
    </citation>
    <scope>PROTEIN SEQUENCE</scope>
    <scope>MASS SPECTROMETRY</scope>
    <scope>AMIDATION AT ARG-10</scope>
    <source>
        <tissue evidence="1">Brain</tissue>
    </source>
</reference>
<accession>P85805</accession>
<name>TRP4_RHOPR</name>